<gene>
    <name type="primary">NEUROD6</name>
    <name type="synonym">ATOH2</name>
    <name type="synonym">BHLHA2</name>
    <name type="ORF">My051</name>
</gene>
<reference key="1">
    <citation type="journal article" date="2002" name="J. Genet.">
        <title>Cloning, chromosome localization and features of a novel human gene, MATH2.</title>
        <authorList>
            <person name="Guo L."/>
            <person name="Jiang M."/>
            <person name="Ma Y."/>
            <person name="Cheng H."/>
            <person name="Ni X."/>
            <person name="Jin Y."/>
            <person name="Xie Y."/>
            <person name="Mao Y.-M."/>
        </authorList>
    </citation>
    <scope>NUCLEOTIDE SEQUENCE [LARGE SCALE MRNA]</scope>
    <source>
        <tissue>Fetal brain</tissue>
    </source>
</reference>
<reference key="2">
    <citation type="journal article" date="2004" name="Nat. Genet.">
        <title>Complete sequencing and characterization of 21,243 full-length human cDNAs.</title>
        <authorList>
            <person name="Ota T."/>
            <person name="Suzuki Y."/>
            <person name="Nishikawa T."/>
            <person name="Otsuki T."/>
            <person name="Sugiyama T."/>
            <person name="Irie R."/>
            <person name="Wakamatsu A."/>
            <person name="Hayashi K."/>
            <person name="Sato H."/>
            <person name="Nagai K."/>
            <person name="Kimura K."/>
            <person name="Makita H."/>
            <person name="Sekine M."/>
            <person name="Obayashi M."/>
            <person name="Nishi T."/>
            <person name="Shibahara T."/>
            <person name="Tanaka T."/>
            <person name="Ishii S."/>
            <person name="Yamamoto J."/>
            <person name="Saito K."/>
            <person name="Kawai Y."/>
            <person name="Isono Y."/>
            <person name="Nakamura Y."/>
            <person name="Nagahari K."/>
            <person name="Murakami K."/>
            <person name="Yasuda T."/>
            <person name="Iwayanagi T."/>
            <person name="Wagatsuma M."/>
            <person name="Shiratori A."/>
            <person name="Sudo H."/>
            <person name="Hosoiri T."/>
            <person name="Kaku Y."/>
            <person name="Kodaira H."/>
            <person name="Kondo H."/>
            <person name="Sugawara M."/>
            <person name="Takahashi M."/>
            <person name="Kanda K."/>
            <person name="Yokoi T."/>
            <person name="Furuya T."/>
            <person name="Kikkawa E."/>
            <person name="Omura Y."/>
            <person name="Abe K."/>
            <person name="Kamihara K."/>
            <person name="Katsuta N."/>
            <person name="Sato K."/>
            <person name="Tanikawa M."/>
            <person name="Yamazaki M."/>
            <person name="Ninomiya K."/>
            <person name="Ishibashi T."/>
            <person name="Yamashita H."/>
            <person name="Murakawa K."/>
            <person name="Fujimori K."/>
            <person name="Tanai H."/>
            <person name="Kimata M."/>
            <person name="Watanabe M."/>
            <person name="Hiraoka S."/>
            <person name="Chiba Y."/>
            <person name="Ishida S."/>
            <person name="Ono Y."/>
            <person name="Takiguchi S."/>
            <person name="Watanabe S."/>
            <person name="Yosida M."/>
            <person name="Hotuta T."/>
            <person name="Kusano J."/>
            <person name="Kanehori K."/>
            <person name="Takahashi-Fujii A."/>
            <person name="Hara H."/>
            <person name="Tanase T.-O."/>
            <person name="Nomura Y."/>
            <person name="Togiya S."/>
            <person name="Komai F."/>
            <person name="Hara R."/>
            <person name="Takeuchi K."/>
            <person name="Arita M."/>
            <person name="Imose N."/>
            <person name="Musashino K."/>
            <person name="Yuuki H."/>
            <person name="Oshima A."/>
            <person name="Sasaki N."/>
            <person name="Aotsuka S."/>
            <person name="Yoshikawa Y."/>
            <person name="Matsunawa H."/>
            <person name="Ichihara T."/>
            <person name="Shiohata N."/>
            <person name="Sano S."/>
            <person name="Moriya S."/>
            <person name="Momiyama H."/>
            <person name="Satoh N."/>
            <person name="Takami S."/>
            <person name="Terashima Y."/>
            <person name="Suzuki O."/>
            <person name="Nakagawa S."/>
            <person name="Senoh A."/>
            <person name="Mizoguchi H."/>
            <person name="Goto Y."/>
            <person name="Shimizu F."/>
            <person name="Wakebe H."/>
            <person name="Hishigaki H."/>
            <person name="Watanabe T."/>
            <person name="Sugiyama A."/>
            <person name="Takemoto M."/>
            <person name="Kawakami B."/>
            <person name="Yamazaki M."/>
            <person name="Watanabe K."/>
            <person name="Kumagai A."/>
            <person name="Itakura S."/>
            <person name="Fukuzumi Y."/>
            <person name="Fujimori Y."/>
            <person name="Komiyama M."/>
            <person name="Tashiro H."/>
            <person name="Tanigami A."/>
            <person name="Fujiwara T."/>
            <person name="Ono T."/>
            <person name="Yamada K."/>
            <person name="Fujii Y."/>
            <person name="Ozaki K."/>
            <person name="Hirao M."/>
            <person name="Ohmori Y."/>
            <person name="Kawabata A."/>
            <person name="Hikiji T."/>
            <person name="Kobatake N."/>
            <person name="Inagaki H."/>
            <person name="Ikema Y."/>
            <person name="Okamoto S."/>
            <person name="Okitani R."/>
            <person name="Kawakami T."/>
            <person name="Noguchi S."/>
            <person name="Itoh T."/>
            <person name="Shigeta K."/>
            <person name="Senba T."/>
            <person name="Matsumura K."/>
            <person name="Nakajima Y."/>
            <person name="Mizuno T."/>
            <person name="Morinaga M."/>
            <person name="Sasaki M."/>
            <person name="Togashi T."/>
            <person name="Oyama M."/>
            <person name="Hata H."/>
            <person name="Watanabe M."/>
            <person name="Komatsu T."/>
            <person name="Mizushima-Sugano J."/>
            <person name="Satoh T."/>
            <person name="Shirai Y."/>
            <person name="Takahashi Y."/>
            <person name="Nakagawa K."/>
            <person name="Okumura K."/>
            <person name="Nagase T."/>
            <person name="Nomura N."/>
            <person name="Kikuchi H."/>
            <person name="Masuho Y."/>
            <person name="Yamashita R."/>
            <person name="Nakai K."/>
            <person name="Yada T."/>
            <person name="Nakamura Y."/>
            <person name="Ohara O."/>
            <person name="Isogai T."/>
            <person name="Sugano S."/>
        </authorList>
    </citation>
    <scope>NUCLEOTIDE SEQUENCE [LARGE SCALE MRNA]</scope>
    <source>
        <tissue>Amygdala</tissue>
        <tissue>Brain</tissue>
    </source>
</reference>
<reference key="3">
    <citation type="submission" date="2005-07" db="EMBL/GenBank/DDBJ databases">
        <authorList>
            <person name="Mural R.J."/>
            <person name="Istrail S."/>
            <person name="Sutton G."/>
            <person name="Florea L."/>
            <person name="Halpern A.L."/>
            <person name="Mobarry C.M."/>
            <person name="Lippert R."/>
            <person name="Walenz B."/>
            <person name="Shatkay H."/>
            <person name="Dew I."/>
            <person name="Miller J.R."/>
            <person name="Flanigan M.J."/>
            <person name="Edwards N.J."/>
            <person name="Bolanos R."/>
            <person name="Fasulo D."/>
            <person name="Halldorsson B.V."/>
            <person name="Hannenhalli S."/>
            <person name="Turner R."/>
            <person name="Yooseph S."/>
            <person name="Lu F."/>
            <person name="Nusskern D.R."/>
            <person name="Shue B.C."/>
            <person name="Zheng X.H."/>
            <person name="Zhong F."/>
            <person name="Delcher A.L."/>
            <person name="Huson D.H."/>
            <person name="Kravitz S.A."/>
            <person name="Mouchard L."/>
            <person name="Reinert K."/>
            <person name="Remington K.A."/>
            <person name="Clark A.G."/>
            <person name="Waterman M.S."/>
            <person name="Eichler E.E."/>
            <person name="Adams M.D."/>
            <person name="Hunkapiller M.W."/>
            <person name="Myers E.W."/>
            <person name="Venter J.C."/>
        </authorList>
    </citation>
    <scope>NUCLEOTIDE SEQUENCE [LARGE SCALE GENOMIC DNA]</scope>
</reference>
<evidence type="ECO:0000250" key="1"/>
<evidence type="ECO:0000255" key="2"/>
<evidence type="ECO:0000255" key="3">
    <source>
        <dbReference type="PROSITE-ProRule" id="PRU00981"/>
    </source>
</evidence>
<evidence type="ECO:0000256" key="4">
    <source>
        <dbReference type="SAM" id="MobiDB-lite"/>
    </source>
</evidence>
<evidence type="ECO:0000305" key="5"/>
<feature type="chain" id="PRO_0000127393" description="Neurogenic differentiation factor 6">
    <location>
        <begin position="1"/>
        <end position="337"/>
    </location>
</feature>
<feature type="domain" description="bHLH" evidence="3">
    <location>
        <begin position="94"/>
        <end position="146"/>
    </location>
</feature>
<feature type="region of interest" description="Disordered" evidence="4">
    <location>
        <begin position="43"/>
        <end position="82"/>
    </location>
</feature>
<feature type="short sequence motif" description="Nuclear localization signal" evidence="2">
    <location>
        <begin position="80"/>
        <end position="86"/>
    </location>
</feature>
<feature type="compositionally biased region" description="Acidic residues" evidence="4">
    <location>
        <begin position="54"/>
        <end position="71"/>
    </location>
</feature>
<organism>
    <name type="scientific">Homo sapiens</name>
    <name type="common">Human</name>
    <dbReference type="NCBI Taxonomy" id="9606"/>
    <lineage>
        <taxon>Eukaryota</taxon>
        <taxon>Metazoa</taxon>
        <taxon>Chordata</taxon>
        <taxon>Craniata</taxon>
        <taxon>Vertebrata</taxon>
        <taxon>Euteleostomi</taxon>
        <taxon>Mammalia</taxon>
        <taxon>Eutheria</taxon>
        <taxon>Euarchontoglires</taxon>
        <taxon>Primates</taxon>
        <taxon>Haplorrhini</taxon>
        <taxon>Catarrhini</taxon>
        <taxon>Hominidae</taxon>
        <taxon>Homo</taxon>
    </lineage>
</organism>
<protein>
    <recommendedName>
        <fullName>Neurogenic differentiation factor 6</fullName>
        <shortName>NeuroD6</shortName>
    </recommendedName>
    <alternativeName>
        <fullName>Class A basic helix-loop-helix protein 2</fullName>
        <shortName>bHLHa2</shortName>
    </alternativeName>
    <alternativeName>
        <fullName>Protein atonal homolog 2</fullName>
    </alternativeName>
</protein>
<name>NDF6_HUMAN</name>
<dbReference type="EMBL" id="AF063609">
    <property type="protein sequence ID" value="AAG43167.1"/>
    <property type="status" value="ALT_FRAME"/>
    <property type="molecule type" value="mRNA"/>
</dbReference>
<dbReference type="EMBL" id="AF248954">
    <property type="protein sequence ID" value="AAO12759.1"/>
    <property type="molecule type" value="mRNA"/>
</dbReference>
<dbReference type="EMBL" id="AK055238">
    <property type="protein sequence ID" value="BAB70885.1"/>
    <property type="molecule type" value="mRNA"/>
</dbReference>
<dbReference type="EMBL" id="AK289619">
    <property type="protein sequence ID" value="BAF82308.1"/>
    <property type="molecule type" value="mRNA"/>
</dbReference>
<dbReference type="EMBL" id="CH471073">
    <property type="protein sequence ID" value="EAW93979.1"/>
    <property type="molecule type" value="Genomic_DNA"/>
</dbReference>
<dbReference type="CCDS" id="CCDS5434.1"/>
<dbReference type="RefSeq" id="NP_073565.2">
    <property type="nucleotide sequence ID" value="NM_022728.3"/>
</dbReference>
<dbReference type="SMR" id="Q96NK8"/>
<dbReference type="BioGRID" id="122021">
    <property type="interactions" value="5"/>
</dbReference>
<dbReference type="FunCoup" id="Q96NK8">
    <property type="interactions" value="357"/>
</dbReference>
<dbReference type="IntAct" id="Q96NK8">
    <property type="interactions" value="5"/>
</dbReference>
<dbReference type="STRING" id="9606.ENSP00000297142"/>
<dbReference type="iPTMnet" id="Q96NK8"/>
<dbReference type="PhosphoSitePlus" id="Q96NK8"/>
<dbReference type="BioMuta" id="NEUROD6"/>
<dbReference type="DMDM" id="20139067"/>
<dbReference type="jPOST" id="Q96NK8"/>
<dbReference type="MassIVE" id="Q96NK8"/>
<dbReference type="PaxDb" id="9606-ENSP00000297142"/>
<dbReference type="PeptideAtlas" id="Q96NK8"/>
<dbReference type="ProteomicsDB" id="77524"/>
<dbReference type="Antibodypedia" id="12707">
    <property type="antibodies" value="184 antibodies from 30 providers"/>
</dbReference>
<dbReference type="DNASU" id="63974"/>
<dbReference type="Ensembl" id="ENST00000297142.4">
    <property type="protein sequence ID" value="ENSP00000297142.3"/>
    <property type="gene ID" value="ENSG00000164600.7"/>
</dbReference>
<dbReference type="GeneID" id="63974"/>
<dbReference type="KEGG" id="hsa:63974"/>
<dbReference type="MANE-Select" id="ENST00000297142.4">
    <property type="protein sequence ID" value="ENSP00000297142.3"/>
    <property type="RefSeq nucleotide sequence ID" value="NM_022728.4"/>
    <property type="RefSeq protein sequence ID" value="NP_073565.2"/>
</dbReference>
<dbReference type="UCSC" id="uc003tch.5">
    <property type="organism name" value="human"/>
</dbReference>
<dbReference type="AGR" id="HGNC:13804"/>
<dbReference type="CTD" id="63974"/>
<dbReference type="DisGeNET" id="63974"/>
<dbReference type="GeneCards" id="NEUROD6"/>
<dbReference type="HGNC" id="HGNC:13804">
    <property type="gene designation" value="NEUROD6"/>
</dbReference>
<dbReference type="HPA" id="ENSG00000164600">
    <property type="expression patterns" value="Tissue enriched (brain)"/>
</dbReference>
<dbReference type="MIM" id="611513">
    <property type="type" value="gene"/>
</dbReference>
<dbReference type="neXtProt" id="NX_Q96NK8"/>
<dbReference type="OpenTargets" id="ENSG00000164600"/>
<dbReference type="PharmGKB" id="PA31568"/>
<dbReference type="VEuPathDB" id="HostDB:ENSG00000164600"/>
<dbReference type="eggNOG" id="KOG3898">
    <property type="taxonomic scope" value="Eukaryota"/>
</dbReference>
<dbReference type="GeneTree" id="ENSGT00940000159827"/>
<dbReference type="HOGENOM" id="CLU_055134_1_0_1"/>
<dbReference type="InParanoid" id="Q96NK8"/>
<dbReference type="OMA" id="FPYDFHL"/>
<dbReference type="OrthoDB" id="10039134at2759"/>
<dbReference type="PAN-GO" id="Q96NK8">
    <property type="GO annotations" value="5 GO annotations based on evolutionary models"/>
</dbReference>
<dbReference type="PhylomeDB" id="Q96NK8"/>
<dbReference type="TreeFam" id="TF315153"/>
<dbReference type="PathwayCommons" id="Q96NK8"/>
<dbReference type="SignaLink" id="Q96NK8"/>
<dbReference type="BioGRID-ORCS" id="63974">
    <property type="hits" value="8 hits in 1167 CRISPR screens"/>
</dbReference>
<dbReference type="ChiTaRS" id="NEUROD6">
    <property type="organism name" value="human"/>
</dbReference>
<dbReference type="GenomeRNAi" id="63974"/>
<dbReference type="Pharos" id="Q96NK8">
    <property type="development level" value="Tbio"/>
</dbReference>
<dbReference type="PRO" id="PR:Q96NK8"/>
<dbReference type="Proteomes" id="UP000005640">
    <property type="component" value="Chromosome 7"/>
</dbReference>
<dbReference type="RNAct" id="Q96NK8">
    <property type="molecule type" value="protein"/>
</dbReference>
<dbReference type="Bgee" id="ENSG00000164600">
    <property type="expression patterns" value="Expressed in cortical plate and 37 other cell types or tissues"/>
</dbReference>
<dbReference type="ExpressionAtlas" id="Q96NK8">
    <property type="expression patterns" value="baseline and differential"/>
</dbReference>
<dbReference type="GO" id="GO:0000785">
    <property type="term" value="C:chromatin"/>
    <property type="evidence" value="ECO:0000247"/>
    <property type="project" value="NTNU_SB"/>
</dbReference>
<dbReference type="GO" id="GO:0005634">
    <property type="term" value="C:nucleus"/>
    <property type="evidence" value="ECO:0000318"/>
    <property type="project" value="GO_Central"/>
</dbReference>
<dbReference type="GO" id="GO:0001228">
    <property type="term" value="F:DNA-binding transcription activator activity, RNA polymerase II-specific"/>
    <property type="evidence" value="ECO:0007669"/>
    <property type="project" value="Ensembl"/>
</dbReference>
<dbReference type="GO" id="GO:0000981">
    <property type="term" value="F:DNA-binding transcription factor activity, RNA polymerase II-specific"/>
    <property type="evidence" value="ECO:0000247"/>
    <property type="project" value="NTNU_SB"/>
</dbReference>
<dbReference type="GO" id="GO:0070888">
    <property type="term" value="F:E-box binding"/>
    <property type="evidence" value="ECO:0000318"/>
    <property type="project" value="GO_Central"/>
</dbReference>
<dbReference type="GO" id="GO:0046983">
    <property type="term" value="F:protein dimerization activity"/>
    <property type="evidence" value="ECO:0007669"/>
    <property type="project" value="InterPro"/>
</dbReference>
<dbReference type="GO" id="GO:0061564">
    <property type="term" value="P:axon development"/>
    <property type="evidence" value="ECO:0000318"/>
    <property type="project" value="GO_Central"/>
</dbReference>
<dbReference type="GO" id="GO:0021542">
    <property type="term" value="P:dentate gyrus development"/>
    <property type="evidence" value="ECO:0007669"/>
    <property type="project" value="Ensembl"/>
</dbReference>
<dbReference type="GO" id="GO:0045944">
    <property type="term" value="P:positive regulation of transcription by RNA polymerase II"/>
    <property type="evidence" value="ECO:0000318"/>
    <property type="project" value="GO_Central"/>
</dbReference>
<dbReference type="GO" id="GO:0007423">
    <property type="term" value="P:sensory organ development"/>
    <property type="evidence" value="ECO:0000318"/>
    <property type="project" value="GO_Central"/>
</dbReference>
<dbReference type="CDD" id="cd19722">
    <property type="entry name" value="bHLH_TS_NeuroD6_ATOH2"/>
    <property type="match status" value="1"/>
</dbReference>
<dbReference type="FunFam" id="4.10.280.10:FF:000006">
    <property type="entry name" value="Neurogenic differentiation factor"/>
    <property type="match status" value="1"/>
</dbReference>
<dbReference type="Gene3D" id="4.10.280.10">
    <property type="entry name" value="Helix-loop-helix DNA-binding domain"/>
    <property type="match status" value="1"/>
</dbReference>
<dbReference type="InterPro" id="IPR011598">
    <property type="entry name" value="bHLH_dom"/>
</dbReference>
<dbReference type="InterPro" id="IPR050359">
    <property type="entry name" value="bHLH_transcription_factors"/>
</dbReference>
<dbReference type="InterPro" id="IPR036638">
    <property type="entry name" value="HLH_DNA-bd_sf"/>
</dbReference>
<dbReference type="InterPro" id="IPR022575">
    <property type="entry name" value="NeuroD_DUF"/>
</dbReference>
<dbReference type="InterPro" id="IPR016637">
    <property type="entry name" value="TF_bHLH_NeuroD"/>
</dbReference>
<dbReference type="PANTHER" id="PTHR19290">
    <property type="entry name" value="BASIC HELIX-LOOP-HELIX PROTEIN NEUROGENIN-RELATED"/>
    <property type="match status" value="1"/>
</dbReference>
<dbReference type="PANTHER" id="PTHR19290:SF9">
    <property type="entry name" value="NEUROGENIC DIFFERENTIATION FACTOR 6"/>
    <property type="match status" value="1"/>
</dbReference>
<dbReference type="Pfam" id="PF00010">
    <property type="entry name" value="HLH"/>
    <property type="match status" value="1"/>
</dbReference>
<dbReference type="Pfam" id="PF12533">
    <property type="entry name" value="Neuro_bHLH"/>
    <property type="match status" value="1"/>
</dbReference>
<dbReference type="PIRSF" id="PIRSF015618">
    <property type="entry name" value="bHLH_NeuroD"/>
    <property type="match status" value="1"/>
</dbReference>
<dbReference type="SMART" id="SM00353">
    <property type="entry name" value="HLH"/>
    <property type="match status" value="1"/>
</dbReference>
<dbReference type="SUPFAM" id="SSF47459">
    <property type="entry name" value="HLH, helix-loop-helix DNA-binding domain"/>
    <property type="match status" value="1"/>
</dbReference>
<dbReference type="PROSITE" id="PS50888">
    <property type="entry name" value="BHLH"/>
    <property type="match status" value="1"/>
</dbReference>
<accession>Q96NK8</accession>
<accession>Q548T9</accession>
<accession>Q9H3H6</accession>
<keyword id="KW-0010">Activator</keyword>
<keyword id="KW-0217">Developmental protein</keyword>
<keyword id="KW-0221">Differentiation</keyword>
<keyword id="KW-0238">DNA-binding</keyword>
<keyword id="KW-0524">Neurogenesis</keyword>
<keyword id="KW-0539">Nucleus</keyword>
<keyword id="KW-1267">Proteomics identification</keyword>
<keyword id="KW-1185">Reference proteome</keyword>
<keyword id="KW-0804">Transcription</keyword>
<keyword id="KW-0805">Transcription regulation</keyword>
<sequence>MLTLPFDESVVMPESQMCRKFSRECEDQKQIKKPESFSKQIVLRGKSIKRAPGEETEKEEEEEDREEEDENGLPRRRGLRKKKTTKLRLERVKFRRQEANARERNRMHGLNDALDNLRKVVPCYSKTQKLSKIETLRLAKNYIWALSEILRIGKRPDLLTFVQNLCKGLSQPTTNLVAGCLQLNARSFLMGQGGEAAHHTRSPYSTFYPPYHSPELTTPPGHGTLDNSKSMKPYNYCSAYESFYESTSPECASPQFEGPLSPPPINYNGIFSLKQEETLDYGKNYNYGMHYCAVPPRGPLGQGAMFRLPTDSHFPYDLHLRSQSLTMQDELNAVFHN</sequence>
<proteinExistence type="evidence at protein level"/>
<comment type="function">
    <text evidence="1">Activates E box-dependent transcription in collaboration with TCF3/E47. May be a trans-acting factor involved in the development and maintenance of the mammalian nervous system. Transactivates the promoter of its own gene (By similarity).</text>
</comment>
<comment type="subunit">
    <text evidence="1">Efficient DNA binding requires dimerization with another bHLH protein.</text>
</comment>
<comment type="subcellular location">
    <subcellularLocation>
        <location evidence="5">Nucleus</location>
    </subcellularLocation>
</comment>
<comment type="sequence caution" evidence="5">
    <conflict type="frameshift">
        <sequence resource="EMBL-CDS" id="AAG43167"/>
    </conflict>
</comment>